<gene>
    <name type="primary">GLB1</name>
</gene>
<evidence type="ECO:0000250" key="1"/>
<evidence type="ECO:0000250" key="2">
    <source>
        <dbReference type="UniProtKB" id="P16278"/>
    </source>
</evidence>
<evidence type="ECO:0000255" key="3"/>
<evidence type="ECO:0000305" key="4"/>
<dbReference type="EC" id="3.2.1.23" evidence="2"/>
<dbReference type="EMBL" id="AB325580">
    <property type="protein sequence ID" value="BAF64285.1"/>
    <property type="molecule type" value="mRNA"/>
</dbReference>
<dbReference type="EMBL" id="BT021742">
    <property type="protein sequence ID" value="AAX46589.1"/>
    <property type="molecule type" value="mRNA"/>
</dbReference>
<dbReference type="RefSeq" id="NP_001030215.1">
    <property type="nucleotide sequence ID" value="NM_001035043.1"/>
</dbReference>
<dbReference type="SMR" id="Q58D55"/>
<dbReference type="FunCoup" id="Q58D55">
    <property type="interactions" value="1068"/>
</dbReference>
<dbReference type="STRING" id="9913.ENSBTAP00000020296"/>
<dbReference type="BindingDB" id="Q58D55"/>
<dbReference type="ChEMBL" id="CHEMBL3482"/>
<dbReference type="DrugCentral" id="Q58D55"/>
<dbReference type="CAZy" id="GH35">
    <property type="family name" value="Glycoside Hydrolase Family 35"/>
</dbReference>
<dbReference type="GlyCosmos" id="Q58D55">
    <property type="glycosylation" value="6 sites, No reported glycans"/>
</dbReference>
<dbReference type="GlyGen" id="Q58D55">
    <property type="glycosylation" value="6 sites"/>
</dbReference>
<dbReference type="PaxDb" id="9913-ENSBTAP00000020296"/>
<dbReference type="GeneID" id="507188"/>
<dbReference type="KEGG" id="bta:507188"/>
<dbReference type="CTD" id="2720"/>
<dbReference type="eggNOG" id="KOG0496">
    <property type="taxonomic scope" value="Eukaryota"/>
</dbReference>
<dbReference type="InParanoid" id="Q58D55"/>
<dbReference type="OrthoDB" id="1657402at2759"/>
<dbReference type="PRO" id="PR:Q58D55"/>
<dbReference type="Proteomes" id="UP000009136">
    <property type="component" value="Unplaced"/>
</dbReference>
<dbReference type="GO" id="GO:0005764">
    <property type="term" value="C:lysosome"/>
    <property type="evidence" value="ECO:0007669"/>
    <property type="project" value="UniProtKB-SubCell"/>
</dbReference>
<dbReference type="GO" id="GO:0005773">
    <property type="term" value="C:vacuole"/>
    <property type="evidence" value="ECO:0000318"/>
    <property type="project" value="GO_Central"/>
</dbReference>
<dbReference type="GO" id="GO:0004565">
    <property type="term" value="F:beta-galactosidase activity"/>
    <property type="evidence" value="ECO:0000250"/>
    <property type="project" value="UniProtKB"/>
</dbReference>
<dbReference type="GO" id="GO:0019388">
    <property type="term" value="P:galactose catabolic process"/>
    <property type="evidence" value="ECO:0000318"/>
    <property type="project" value="GO_Central"/>
</dbReference>
<dbReference type="FunFam" id="2.60.120.260:FF:000021">
    <property type="entry name" value="Beta-galactosidase"/>
    <property type="match status" value="1"/>
</dbReference>
<dbReference type="FunFam" id="2.60.120.260:FF:000115">
    <property type="entry name" value="Beta-galactosidase"/>
    <property type="match status" value="1"/>
</dbReference>
<dbReference type="FunFam" id="2.60.120.260:FF:000260">
    <property type="entry name" value="Beta-galactosidase"/>
    <property type="match status" value="1"/>
</dbReference>
<dbReference type="FunFam" id="3.20.20.80:FF:000017">
    <property type="entry name" value="Beta-galactosidase"/>
    <property type="match status" value="1"/>
</dbReference>
<dbReference type="Gene3D" id="2.60.120.260">
    <property type="entry name" value="Galactose-binding domain-like"/>
    <property type="match status" value="2"/>
</dbReference>
<dbReference type="Gene3D" id="3.20.20.80">
    <property type="entry name" value="Glycosidases"/>
    <property type="match status" value="1"/>
</dbReference>
<dbReference type="InterPro" id="IPR026283">
    <property type="entry name" value="B-gal_1-like"/>
</dbReference>
<dbReference type="InterPro" id="IPR048912">
    <property type="entry name" value="BetaGal1-like_ABD1"/>
</dbReference>
<dbReference type="InterPro" id="IPR048913">
    <property type="entry name" value="BetaGal_gal-bd"/>
</dbReference>
<dbReference type="InterPro" id="IPR008979">
    <property type="entry name" value="Galactose-bd-like_sf"/>
</dbReference>
<dbReference type="InterPro" id="IPR031330">
    <property type="entry name" value="Gly_Hdrlase_35_cat"/>
</dbReference>
<dbReference type="InterPro" id="IPR019801">
    <property type="entry name" value="Glyco_hydro_35_CS"/>
</dbReference>
<dbReference type="InterPro" id="IPR001944">
    <property type="entry name" value="Glycoside_Hdrlase_35"/>
</dbReference>
<dbReference type="InterPro" id="IPR017853">
    <property type="entry name" value="Glycoside_hydrolase_SF"/>
</dbReference>
<dbReference type="PANTHER" id="PTHR23421">
    <property type="entry name" value="BETA-GALACTOSIDASE RELATED"/>
    <property type="match status" value="1"/>
</dbReference>
<dbReference type="Pfam" id="PF21317">
    <property type="entry name" value="BetaGal_ABD_1"/>
    <property type="match status" value="1"/>
</dbReference>
<dbReference type="Pfam" id="PF21467">
    <property type="entry name" value="BetaGal_gal-bd"/>
    <property type="match status" value="1"/>
</dbReference>
<dbReference type="Pfam" id="PF01301">
    <property type="entry name" value="Glyco_hydro_35"/>
    <property type="match status" value="1"/>
</dbReference>
<dbReference type="PIRSF" id="PIRSF006336">
    <property type="entry name" value="B-gal"/>
    <property type="match status" value="1"/>
</dbReference>
<dbReference type="PRINTS" id="PR00742">
    <property type="entry name" value="GLHYDRLASE35"/>
</dbReference>
<dbReference type="SUPFAM" id="SSF51445">
    <property type="entry name" value="(Trans)glycosidases"/>
    <property type="match status" value="1"/>
</dbReference>
<dbReference type="SUPFAM" id="SSF49785">
    <property type="entry name" value="Galactose-binding domain-like"/>
    <property type="match status" value="1"/>
</dbReference>
<dbReference type="PROSITE" id="PS01182">
    <property type="entry name" value="GLYCOSYL_HYDROL_F35"/>
    <property type="match status" value="1"/>
</dbReference>
<organism>
    <name type="scientific">Bos taurus</name>
    <name type="common">Bovine</name>
    <dbReference type="NCBI Taxonomy" id="9913"/>
    <lineage>
        <taxon>Eukaryota</taxon>
        <taxon>Metazoa</taxon>
        <taxon>Chordata</taxon>
        <taxon>Craniata</taxon>
        <taxon>Vertebrata</taxon>
        <taxon>Euteleostomi</taxon>
        <taxon>Mammalia</taxon>
        <taxon>Eutheria</taxon>
        <taxon>Laurasiatheria</taxon>
        <taxon>Artiodactyla</taxon>
        <taxon>Ruminantia</taxon>
        <taxon>Pecora</taxon>
        <taxon>Bovidae</taxon>
        <taxon>Bovinae</taxon>
        <taxon>Bos</taxon>
    </lineage>
</organism>
<proteinExistence type="evidence at transcript level"/>
<keyword id="KW-1015">Disulfide bond</keyword>
<keyword id="KW-0325">Glycoprotein</keyword>
<keyword id="KW-0326">Glycosidase</keyword>
<keyword id="KW-0378">Hydrolase</keyword>
<keyword id="KW-0458">Lysosome</keyword>
<keyword id="KW-1185">Reference proteome</keyword>
<keyword id="KW-0732">Signal</keyword>
<keyword id="KW-0865">Zymogen</keyword>
<feature type="signal peptide" evidence="3">
    <location>
        <begin position="1"/>
        <end position="22"/>
    </location>
</feature>
<feature type="propeptide" id="PRO_0000283035" evidence="1">
    <location>
        <begin position="23"/>
        <end position="27"/>
    </location>
</feature>
<feature type="chain" id="PRO_0000283036" description="Beta-galactosidase">
    <location>
        <begin position="28"/>
        <end position="653"/>
    </location>
</feature>
<feature type="active site" description="Proton donor" evidence="2">
    <location>
        <position position="187"/>
    </location>
</feature>
<feature type="active site" description="Nucleophile" evidence="2">
    <location>
        <position position="267"/>
    </location>
</feature>
<feature type="binding site" evidence="2">
    <location>
        <position position="82"/>
    </location>
    <ligand>
        <name>substrate</name>
    </ligand>
</feature>
<feature type="binding site" evidence="2">
    <location>
        <position position="128"/>
    </location>
    <ligand>
        <name>substrate</name>
    </ligand>
</feature>
<feature type="binding site" evidence="2">
    <location>
        <position position="186"/>
    </location>
    <ligand>
        <name>substrate</name>
    </ligand>
</feature>
<feature type="binding site" evidence="2">
    <location>
        <position position="332"/>
    </location>
    <ligand>
        <name>substrate</name>
    </ligand>
</feature>
<feature type="glycosylation site" description="N-linked (GlcNAc...) asparagine" evidence="3">
    <location>
        <position position="25"/>
    </location>
</feature>
<feature type="glycosylation site" description="N-linked (GlcNAc...) asparagine" evidence="3">
    <location>
        <position position="96"/>
    </location>
</feature>
<feature type="glycosylation site" description="N-linked (GlcNAc...) asparagine" evidence="3">
    <location>
        <position position="246"/>
    </location>
</feature>
<feature type="glycosylation site" description="N-linked (GlcNAc...) asparagine" evidence="3">
    <location>
        <position position="463"/>
    </location>
</feature>
<feature type="glycosylation site" description="N-linked (GlcNAc...) asparagine" evidence="3">
    <location>
        <position position="497"/>
    </location>
</feature>
<feature type="glycosylation site" description="N-linked (GlcNAc...) asparagine" evidence="3">
    <location>
        <position position="554"/>
    </location>
</feature>
<feature type="disulfide bond" evidence="2">
    <location>
        <begin position="194"/>
        <end position="229"/>
    </location>
</feature>
<feature type="disulfide bond" evidence="2">
    <location>
        <begin position="625"/>
        <end position="633"/>
    </location>
</feature>
<accession>Q58D55</accession>
<accession>A5LIP2</accession>
<reference key="1">
    <citation type="submission" date="2007-06" db="EMBL/GenBank/DDBJ databases">
        <title>Molecular cloning and characterization of lysosomal beta-galactosidase from bovine liver.</title>
        <authorList>
            <person name="Satoh Y."/>
            <person name="Yajima A."/>
            <person name="Uda Y."/>
        </authorList>
    </citation>
    <scope>NUCLEOTIDE SEQUENCE [MRNA]</scope>
    <source>
        <tissue>Liver</tissue>
    </source>
</reference>
<reference key="2">
    <citation type="journal article" date="2005" name="BMC Genomics">
        <title>Characterization of 954 bovine full-CDS cDNA sequences.</title>
        <authorList>
            <person name="Harhay G.P."/>
            <person name="Sonstegard T.S."/>
            <person name="Keele J.W."/>
            <person name="Heaton M.P."/>
            <person name="Clawson M.L."/>
            <person name="Snelling W.M."/>
            <person name="Wiedmann R.T."/>
            <person name="Van Tassell C.P."/>
            <person name="Smith T.P.L."/>
        </authorList>
    </citation>
    <scope>NUCLEOTIDE SEQUENCE [LARGE SCALE MRNA]</scope>
</reference>
<name>BGAL_BOVIN</name>
<protein>
    <recommendedName>
        <fullName>Beta-galactosidase</fullName>
        <ecNumber evidence="2">3.2.1.23</ecNumber>
    </recommendedName>
    <alternativeName>
        <fullName>Acid beta-galactosidase</fullName>
        <shortName>Lactase</shortName>
    </alternativeName>
</protein>
<comment type="function">
    <text evidence="2">Cleaves beta-linked terminal galactosyl residues from gangliosides, glycoproteins, and glycosaminoglycans.</text>
</comment>
<comment type="catalytic activity">
    <reaction evidence="2">
        <text>Hydrolysis of terminal non-reducing beta-D-galactose residues in beta-D-galactosides.</text>
        <dbReference type="EC" id="3.2.1.23"/>
    </reaction>
</comment>
<comment type="subunit">
    <text evidence="2">Homodimer. May form higher multimers.</text>
</comment>
<comment type="subcellular location">
    <subcellularLocation>
        <location evidence="2">Lysosome</location>
    </subcellularLocation>
</comment>
<comment type="similarity">
    <text evidence="4">Belongs to the glycosyl hydrolase 35 family.</text>
</comment>
<sequence>MPGVVRLLALLLVPLLLGSARGLHNATQRTFQIDYRRNRFLKDGQPFRYISGSIHYFRVPRFYWKDRLLKMKMAGLNAIQTYVAWNFHELQPGRYNFSGDHDVEHFIQLAHELGLLVILRPGPYICAEWDMGGLPAWLLEKKSIVLRSSDPDYLAAVDKWLGVLLPKMRPLLYKNGGPIITVQVENEYGSYLSCDYDYLRFLQKRFHDHLGEDVLLFTTDGVNERLLQCGALQGLYATVDFSPGTNLTAAFMLQRKFEPTGPLVNSEFYTGWLDHWGQRHSTVSSKAVAFTLHDMLALGANVNMYMFIGGTNFAYWNGANIPYQPQPTSYDYDAPLSEAGDLTEKYFALRDIIQKFAKVPEGPIPPSTPKFAYGKVALNKLKTVEDALNILCPSGPIKSVYPLTFIDVKQYFGFVLYRTMLPEDCSDPTPLSSPLSGVHDRAYVSVNGVAQGILERESVITLNITGKAGATLDLLVENMGRVNYGSSINDFKGLVSNLTLGSKILTNWEIFPLDMEDAVRSHLGTWGGRDRGYHNKARAHSPPTYALPTFYVGNFTIPSGIADLPQDTFIQFPGWTKGQVWINGFNLGRYWPVRGPQMTLFVPQHILVTSTPNTIVVLELEHAPCQDGGPELCTVEFVDKPVFRTVQTHRHAN</sequence>